<proteinExistence type="evidence at protein level"/>
<protein>
    <recommendedName>
        <fullName evidence="3">Alpha-conotoxin ViIA</fullName>
    </recommendedName>
    <alternativeName>
        <fullName evidence="3">ViIA-II</fullName>
    </alternativeName>
</protein>
<reference key="1">
    <citation type="journal article" date="2015" name="Acta Biochim. Biophys. Sin.">
        <title>A novel 4/6-type alpha-conotoxin ViIA selectively inhibits nAchR alpha3beta2 subtype.</title>
        <authorList>
            <person name="Li L."/>
            <person name="Liu N."/>
            <person name="Ding R."/>
            <person name="Wang S."/>
            <person name="Liu Z."/>
            <person name="Li H."/>
            <person name="Zheng X."/>
            <person name="Dai Q."/>
        </authorList>
    </citation>
    <scope>NUCLEOTIDE SEQUENCE [MRNA]</scope>
    <scope>SYNTHESIS OF 46-61</scope>
    <scope>MUTAGENESIS OF ARG-46; ASP-47; HIS-56 AND CYS-61</scope>
    <scope>DISULFIDE BOND</scope>
    <source>
        <tissue>Venom duct</tissue>
    </source>
</reference>
<feature type="signal peptide" evidence="1">
    <location>
        <begin position="1"/>
        <end position="18"/>
    </location>
</feature>
<feature type="propeptide" id="PRO_0000439627" evidence="4">
    <location>
        <begin position="19"/>
        <end position="45"/>
    </location>
</feature>
<feature type="peptide" id="PRO_5003322255" description="Alpha-conotoxin ViIA" evidence="5">
    <location>
        <begin position="46"/>
        <end position="61"/>
    </location>
</feature>
<feature type="disulfide bond" evidence="5">
    <location>
        <begin position="48"/>
        <end position="54"/>
    </location>
</feature>
<feature type="disulfide bond" evidence="5">
    <location>
        <begin position="49"/>
        <end position="61"/>
    </location>
</feature>
<feature type="mutagenesis site" description="1.6-fold more potent in inhibition of rat alpha-3-beta-2 nAChR." evidence="2">
    <original>R</original>
    <variation>A</variation>
    <location>
        <position position="46"/>
    </location>
</feature>
<feature type="mutagenesis site" description="No change in inhibition of rat alpha-3-beta-2 nAChR." evidence="2">
    <original>D</original>
    <variation>A</variation>
    <location>
        <position position="47"/>
    </location>
</feature>
<feature type="mutagenesis site" description="Complete loss of effect on rat alpha-3-beta-2 nAChR." evidence="2">
    <original>H</original>
    <variation>A</variation>
    <location>
        <position position="56"/>
    </location>
</feature>
<feature type="mutagenesis site" description="13.6-fold more potent in inhibition of rat alpha-3-beta-2 nAChR." evidence="2">
    <original>C</original>
    <variation>CL</variation>
    <location>
        <position position="61"/>
    </location>
</feature>
<keyword id="KW-0008">Acetylcholine receptor inhibiting toxin</keyword>
<keyword id="KW-1015">Disulfide bond</keyword>
<keyword id="KW-0528">Neurotoxin</keyword>
<keyword id="KW-0629">Postsynaptic neurotoxin</keyword>
<keyword id="KW-0964">Secreted</keyword>
<keyword id="KW-0732">Signal</keyword>
<keyword id="KW-0800">Toxin</keyword>
<dbReference type="EMBL" id="JF436964">
    <property type="protein sequence ID" value="ADZ99320.1"/>
    <property type="molecule type" value="mRNA"/>
</dbReference>
<dbReference type="GO" id="GO:0005576">
    <property type="term" value="C:extracellular region"/>
    <property type="evidence" value="ECO:0007669"/>
    <property type="project" value="UniProtKB-SubCell"/>
</dbReference>
<dbReference type="GO" id="GO:0035792">
    <property type="term" value="C:host cell postsynaptic membrane"/>
    <property type="evidence" value="ECO:0007669"/>
    <property type="project" value="UniProtKB-KW"/>
</dbReference>
<dbReference type="GO" id="GO:0030550">
    <property type="term" value="F:acetylcholine receptor inhibitor activity"/>
    <property type="evidence" value="ECO:0007669"/>
    <property type="project" value="UniProtKB-KW"/>
</dbReference>
<dbReference type="GO" id="GO:0090729">
    <property type="term" value="F:toxin activity"/>
    <property type="evidence" value="ECO:0007669"/>
    <property type="project" value="UniProtKB-KW"/>
</dbReference>
<dbReference type="InterPro" id="IPR009958">
    <property type="entry name" value="Conotoxin_a-typ"/>
</dbReference>
<dbReference type="InterPro" id="IPR018072">
    <property type="entry name" value="Conotoxin_a-typ_CS"/>
</dbReference>
<dbReference type="Pfam" id="PF07365">
    <property type="entry name" value="Toxin_8"/>
    <property type="match status" value="1"/>
</dbReference>
<dbReference type="PROSITE" id="PS60014">
    <property type="entry name" value="ALPHA_CONOTOXIN"/>
    <property type="match status" value="1"/>
</dbReference>
<comment type="function">
    <text evidence="2">Alpha-conotoxins act on postsynaptic membranes, they bind to the nicotinic acetylcholine receptors (nAChR) and thus inhibit them. This toxin selectively inhibits nicotinic acetylcholine receptor (nAChR) alpha-3-beta-2 subtype (IC(50)=845.5 nM).</text>
</comment>
<comment type="subcellular location">
    <subcellularLocation>
        <location evidence="5">Secreted</location>
    </subcellularLocation>
</comment>
<comment type="tissue specificity">
    <text evidence="5">Expressed by the venom duct.</text>
</comment>
<comment type="domain">
    <text evidence="5">The cysteine framework is I (CC-C-C). Alpha4/6 pattern.</text>
</comment>
<comment type="PTM">
    <text evidence="2">The toxin is inactive on the alpha-3-beta-2 nAChR when the disulfide bond connectivity is C1-C4 and C2-C3 (ViIA-I) (IC(50)&gt;10000 nM).</text>
</comment>
<comment type="miscellaneous">
    <text evidence="2">Negative results: does not inhibit alpha-2-beta-2, alpha-2-beta-4, alpha-3-beta-4, alpha-4-beta-2, alpha-4-beta-4, alpha-7 and alpha-9-alpha-10 (PubMed:26511093). In addition, it does not target dorsal root ganglion sodium (Nav), potassium (Kv) and calcium (Cav) ion channels (PubMed:26511093).</text>
</comment>
<comment type="similarity">
    <text evidence="5">Belongs to the conotoxin A superfamily.</text>
</comment>
<comment type="caution">
    <text evidence="5">Authors of PubMed:26511093 indicate an amidation at Cys-61. This amidation is improbable since no Gly follows the mature peptide region. This PTM is therefore not indicated here and we assume that electrophysiological results are obtained with an unamidated synthetic peptide.</text>
</comment>
<sequence>MGMRMMFVVFLLVVFASSVTLDRASYGRYASPVDRASALIAQAILRDCCSNPPCAHNNPDCR</sequence>
<name>CA1A_CONVR</name>
<evidence type="ECO:0000255" key="1"/>
<evidence type="ECO:0000269" key="2">
    <source>
    </source>
</evidence>
<evidence type="ECO:0000303" key="3">
    <source>
    </source>
</evidence>
<evidence type="ECO:0000305" key="4"/>
<evidence type="ECO:0000305" key="5">
    <source>
    </source>
</evidence>
<accession>F5C0A0</accession>
<organism>
    <name type="scientific">Conus virgo</name>
    <name type="common">Virgin cone</name>
    <dbReference type="NCBI Taxonomy" id="89427"/>
    <lineage>
        <taxon>Eukaryota</taxon>
        <taxon>Metazoa</taxon>
        <taxon>Spiralia</taxon>
        <taxon>Lophotrochozoa</taxon>
        <taxon>Mollusca</taxon>
        <taxon>Gastropoda</taxon>
        <taxon>Caenogastropoda</taxon>
        <taxon>Neogastropoda</taxon>
        <taxon>Conoidea</taxon>
        <taxon>Conidae</taxon>
        <taxon>Conus</taxon>
        <taxon>Virgiconus</taxon>
    </lineage>
</organism>